<evidence type="ECO:0000255" key="1">
    <source>
        <dbReference type="HAMAP-Rule" id="MF_00115"/>
    </source>
</evidence>
<comment type="function">
    <text evidence="1">Channel that opens in response to stretch forces in the membrane lipid bilayer. May participate in the regulation of osmotic pressure changes within the cell.</text>
</comment>
<comment type="subunit">
    <text evidence="1">Homopentamer.</text>
</comment>
<comment type="subcellular location">
    <subcellularLocation>
        <location evidence="1">Cell inner membrane</location>
        <topology evidence="1">Multi-pass membrane protein</topology>
    </subcellularLocation>
</comment>
<comment type="similarity">
    <text evidence="1">Belongs to the MscL family.</text>
</comment>
<keyword id="KW-0997">Cell inner membrane</keyword>
<keyword id="KW-1003">Cell membrane</keyword>
<keyword id="KW-0407">Ion channel</keyword>
<keyword id="KW-0406">Ion transport</keyword>
<keyword id="KW-0472">Membrane</keyword>
<keyword id="KW-0812">Transmembrane</keyword>
<keyword id="KW-1133">Transmembrane helix</keyword>
<keyword id="KW-0813">Transport</keyword>
<feature type="chain" id="PRO_1000202978" description="Large-conductance mechanosensitive channel">
    <location>
        <begin position="1"/>
        <end position="139"/>
    </location>
</feature>
<feature type="transmembrane region" description="Helical" evidence="1">
    <location>
        <begin position="9"/>
        <end position="29"/>
    </location>
</feature>
<feature type="transmembrane region" description="Helical" evidence="1">
    <location>
        <begin position="79"/>
        <end position="99"/>
    </location>
</feature>
<accession>C3K2E3</accession>
<name>MSCL_PSEFS</name>
<proteinExistence type="inferred from homology"/>
<protein>
    <recommendedName>
        <fullName evidence="1">Large-conductance mechanosensitive channel</fullName>
    </recommendedName>
</protein>
<dbReference type="EMBL" id="AM181176">
    <property type="protein sequence ID" value="CAY52476.1"/>
    <property type="molecule type" value="Genomic_DNA"/>
</dbReference>
<dbReference type="RefSeq" id="WP_015885990.1">
    <property type="nucleotide sequence ID" value="NC_012660.1"/>
</dbReference>
<dbReference type="SMR" id="C3K2E3"/>
<dbReference type="STRING" id="294.SRM1_04939"/>
<dbReference type="GeneID" id="93466962"/>
<dbReference type="PATRIC" id="fig|216595.4.peg.5464"/>
<dbReference type="eggNOG" id="COG1970">
    <property type="taxonomic scope" value="Bacteria"/>
</dbReference>
<dbReference type="HOGENOM" id="CLU_095787_0_0_6"/>
<dbReference type="OrthoDB" id="9810350at2"/>
<dbReference type="GO" id="GO:0005886">
    <property type="term" value="C:plasma membrane"/>
    <property type="evidence" value="ECO:0007669"/>
    <property type="project" value="UniProtKB-SubCell"/>
</dbReference>
<dbReference type="GO" id="GO:0008381">
    <property type="term" value="F:mechanosensitive monoatomic ion channel activity"/>
    <property type="evidence" value="ECO:0007669"/>
    <property type="project" value="UniProtKB-UniRule"/>
</dbReference>
<dbReference type="FunFam" id="1.10.1200.120:FF:000001">
    <property type="entry name" value="Large-conductance mechanosensitive channel"/>
    <property type="match status" value="1"/>
</dbReference>
<dbReference type="Gene3D" id="1.10.1200.120">
    <property type="entry name" value="Large-conductance mechanosensitive channel, MscL, domain 1"/>
    <property type="match status" value="1"/>
</dbReference>
<dbReference type="HAMAP" id="MF_00115">
    <property type="entry name" value="MscL"/>
    <property type="match status" value="1"/>
</dbReference>
<dbReference type="InterPro" id="IPR019823">
    <property type="entry name" value="Mechanosensitive_channel_CS"/>
</dbReference>
<dbReference type="InterPro" id="IPR001185">
    <property type="entry name" value="MS_channel"/>
</dbReference>
<dbReference type="InterPro" id="IPR037673">
    <property type="entry name" value="MSC/AndL"/>
</dbReference>
<dbReference type="InterPro" id="IPR036019">
    <property type="entry name" value="MscL_channel"/>
</dbReference>
<dbReference type="NCBIfam" id="TIGR00220">
    <property type="entry name" value="mscL"/>
    <property type="match status" value="1"/>
</dbReference>
<dbReference type="NCBIfam" id="NF001843">
    <property type="entry name" value="PRK00567.1-4"/>
    <property type="match status" value="1"/>
</dbReference>
<dbReference type="PANTHER" id="PTHR30266:SF2">
    <property type="entry name" value="LARGE-CONDUCTANCE MECHANOSENSITIVE CHANNEL"/>
    <property type="match status" value="1"/>
</dbReference>
<dbReference type="PANTHER" id="PTHR30266">
    <property type="entry name" value="MECHANOSENSITIVE CHANNEL MSCL"/>
    <property type="match status" value="1"/>
</dbReference>
<dbReference type="Pfam" id="PF01741">
    <property type="entry name" value="MscL"/>
    <property type="match status" value="1"/>
</dbReference>
<dbReference type="PRINTS" id="PR01264">
    <property type="entry name" value="MECHCHANNEL"/>
</dbReference>
<dbReference type="SUPFAM" id="SSF81330">
    <property type="entry name" value="Gated mechanosensitive channel"/>
    <property type="match status" value="1"/>
</dbReference>
<dbReference type="PROSITE" id="PS01327">
    <property type="entry name" value="MSCL"/>
    <property type="match status" value="1"/>
</dbReference>
<reference key="1">
    <citation type="journal article" date="2009" name="Genome Biol.">
        <title>Genomic and genetic analyses of diversity and plant interactions of Pseudomonas fluorescens.</title>
        <authorList>
            <person name="Silby M.W."/>
            <person name="Cerdeno-Tarraga A.M."/>
            <person name="Vernikos G.S."/>
            <person name="Giddens S.R."/>
            <person name="Jackson R.W."/>
            <person name="Preston G.M."/>
            <person name="Zhang X.-X."/>
            <person name="Moon C.D."/>
            <person name="Gehrig S.M."/>
            <person name="Godfrey S.A.C."/>
            <person name="Knight C.G."/>
            <person name="Malone J.G."/>
            <person name="Robinson Z."/>
            <person name="Spiers A.J."/>
            <person name="Harris S."/>
            <person name="Challis G.L."/>
            <person name="Yaxley A.M."/>
            <person name="Harris D."/>
            <person name="Seeger K."/>
            <person name="Murphy L."/>
            <person name="Rutter S."/>
            <person name="Squares R."/>
            <person name="Quail M.A."/>
            <person name="Saunders E."/>
            <person name="Mavromatis K."/>
            <person name="Brettin T.S."/>
            <person name="Bentley S.D."/>
            <person name="Hothersall J."/>
            <person name="Stephens E."/>
            <person name="Thomas C.M."/>
            <person name="Parkhill J."/>
            <person name="Levy S.B."/>
            <person name="Rainey P.B."/>
            <person name="Thomson N.R."/>
        </authorList>
    </citation>
    <scope>NUCLEOTIDE SEQUENCE [LARGE SCALE GENOMIC DNA]</scope>
    <source>
        <strain>SBW25</strain>
    </source>
</reference>
<gene>
    <name evidence="1" type="primary">mscL</name>
    <name type="ordered locus">PFLU_5340</name>
</gene>
<sequence length="139" mass="14577">MGVISEFKAFAVKGNVVDMAVGIIIGAAFGKIVSSFVGDVVMPPIGLLIGGVDFGDLAITLKAAQGDVPAVVLAYGKFIQSVIDFVIVAFAIFMGVKAINRLKREEAVAPSLPPTPTKEEVLLGEIRDLLKAQNDKPLP</sequence>
<organism>
    <name type="scientific">Pseudomonas fluorescens (strain SBW25)</name>
    <dbReference type="NCBI Taxonomy" id="216595"/>
    <lineage>
        <taxon>Bacteria</taxon>
        <taxon>Pseudomonadati</taxon>
        <taxon>Pseudomonadota</taxon>
        <taxon>Gammaproteobacteria</taxon>
        <taxon>Pseudomonadales</taxon>
        <taxon>Pseudomonadaceae</taxon>
        <taxon>Pseudomonas</taxon>
    </lineage>
</organism>